<comment type="function">
    <text evidence="1 3 4 5 6 7">Involved in jasmonate (JA) signaling. Required for jasmonate signaling in plant defense responses (PubMed:22529386). Can complement Arabidopsis coi1-1 mutant and restore jasmonate signaling (PubMed:23320078). Required for JA-regulated defense responses to infestation by the leaffolder Cnaphalocrocis medinalis (PubMed:22558386, PubMed:24003150). May act on an initial response of jasmonate-regulated gene expression toward drought tolerance as part of a BHLH148-TIFY11D/JAZ12-COI1A complex (PubMed:21332845). Component of SCF(COI1) E3 ubiquitin ligase complexes, which may mediate the ubiquitination and subsequent proteasomal degradation of target proteins, including TIFY/JAZ family (By similarity).</text>
</comment>
<comment type="subunit">
    <text evidence="3 6 8">Interacts with TIFY6A/JAZ3, TIFY6B/JAZ4 and TIFY11D/JAZ12 in a coronatine-dependent manner (PubMed:21332845, PubMed:23320078). Interacts with TIFY9/JAZ5, TIFY10A/JAZ6, TIFY10B/JAZ7 and TIFY11C/JAZ11 in a coronatine-dependent manner (PubMed:23320078). Interacts with TIFY11A/JAZ9 in a coronatine-dependent manner (PubMed:23320078, PubMed:25617318).</text>
</comment>
<comment type="tissue specificity">
    <text evidence="6">Expressed in roots, shoots, leaf sheaths and leaf blades.</text>
</comment>
<comment type="induction">
    <text evidence="5">By the leaffolder Cnaphalocrocis medinalis infestation and methyl jasmonate (MeJA) treatment.</text>
</comment>
<comment type="miscellaneous">
    <text evidence="4 5">Plants silencing COI1A and COI1B show increased plant height and seed length, are hypersensitive to gibberellin, and display reduced sensitivity to inhibition of seedling growth by jasmonate (PubMed:22529386). Plants silencing COI1A show early and reduced tillering with few grain filling, and display increased sensitivity to the chewing insect Cnaphalocrocis medinalis (PubMed:22558386).</text>
</comment>
<comment type="sequence caution" evidence="11">
    <conflict type="erroneous gene model prediction">
        <sequence resource="EMBL-CDS" id="BAF06745"/>
    </conflict>
</comment>
<dbReference type="EMBL" id="AY168645">
    <property type="protein sequence ID" value="AAO38719.1"/>
    <property type="molecule type" value="mRNA"/>
</dbReference>
<dbReference type="EMBL" id="DQ028826">
    <property type="protein sequence ID" value="AAY41186.1"/>
    <property type="molecule type" value="mRNA"/>
</dbReference>
<dbReference type="EMBL" id="AP003279">
    <property type="protein sequence ID" value="BAD81943.1"/>
    <property type="molecule type" value="Genomic_DNA"/>
</dbReference>
<dbReference type="EMBL" id="AP008207">
    <property type="protein sequence ID" value="BAF06745.2"/>
    <property type="status" value="ALT_SEQ"/>
    <property type="molecule type" value="Genomic_DNA"/>
</dbReference>
<dbReference type="EMBL" id="AP014957">
    <property type="protein sequence ID" value="BAS75269.1"/>
    <property type="molecule type" value="Genomic_DNA"/>
</dbReference>
<dbReference type="EMBL" id="CM000138">
    <property type="protein sequence ID" value="EAZ14179.1"/>
    <property type="molecule type" value="Genomic_DNA"/>
</dbReference>
<dbReference type="RefSeq" id="XP_015621119.1">
    <property type="nucleotide sequence ID" value="XM_015765633.1"/>
</dbReference>
<dbReference type="SMR" id="Q6Y9P5"/>
<dbReference type="FunCoup" id="Q6Y9P5">
    <property type="interactions" value="710"/>
</dbReference>
<dbReference type="STRING" id="39947.Q6Y9P5"/>
<dbReference type="PaxDb" id="39947-Q6Y9P5"/>
<dbReference type="EnsemblPlants" id="Os01t0853400-01">
    <property type="protein sequence ID" value="Os01t0853400-01"/>
    <property type="gene ID" value="Os01g0853400"/>
</dbReference>
<dbReference type="Gramene" id="Os01t0853400-01">
    <property type="protein sequence ID" value="Os01t0853400-01"/>
    <property type="gene ID" value="Os01g0853400"/>
</dbReference>
<dbReference type="KEGG" id="dosa:Os01g0853400"/>
<dbReference type="eggNOG" id="KOG1947">
    <property type="taxonomic scope" value="Eukaryota"/>
</dbReference>
<dbReference type="HOGENOM" id="CLU_022456_2_0_1"/>
<dbReference type="InParanoid" id="Q6Y9P5"/>
<dbReference type="OMA" id="CYTATPD"/>
<dbReference type="OrthoDB" id="550575at2759"/>
<dbReference type="PlantReactome" id="R-OSA-6787011">
    <property type="pathway name" value="Jasmonic acid signaling"/>
</dbReference>
<dbReference type="Proteomes" id="UP000000763">
    <property type="component" value="Chromosome 1"/>
</dbReference>
<dbReference type="Proteomes" id="UP000007752">
    <property type="component" value="Chromosome 1"/>
</dbReference>
<dbReference type="Proteomes" id="UP000059680">
    <property type="component" value="Chromosome 1"/>
</dbReference>
<dbReference type="GO" id="GO:0019005">
    <property type="term" value="C:SCF ubiquitin ligase complex"/>
    <property type="evidence" value="ECO:0000318"/>
    <property type="project" value="GO_Central"/>
</dbReference>
<dbReference type="GO" id="GO:0002213">
    <property type="term" value="P:defense response to insect"/>
    <property type="evidence" value="ECO:0000315"/>
    <property type="project" value="UniProtKB"/>
</dbReference>
<dbReference type="GO" id="GO:2000022">
    <property type="term" value="P:regulation of jasmonic acid mediated signaling pathway"/>
    <property type="evidence" value="ECO:0000315"/>
    <property type="project" value="UniProtKB"/>
</dbReference>
<dbReference type="GO" id="GO:0031146">
    <property type="term" value="P:SCF-dependent proteasomal ubiquitin-dependent protein catabolic process"/>
    <property type="evidence" value="ECO:0000318"/>
    <property type="project" value="GO_Central"/>
</dbReference>
<dbReference type="CDD" id="cd22159">
    <property type="entry name" value="F-box_AtTIR1-like"/>
    <property type="match status" value="1"/>
</dbReference>
<dbReference type="FunFam" id="3.80.10.10:FF:000124">
    <property type="entry name" value="Coronatine-insensitive protein 1"/>
    <property type="match status" value="1"/>
</dbReference>
<dbReference type="FunFam" id="1.20.1280.50:FF:000034">
    <property type="entry name" value="Coronatine-insensitive protein homolog 2"/>
    <property type="match status" value="1"/>
</dbReference>
<dbReference type="Gene3D" id="1.20.1280.50">
    <property type="match status" value="1"/>
</dbReference>
<dbReference type="Gene3D" id="3.80.10.10">
    <property type="entry name" value="Ribonuclease Inhibitor"/>
    <property type="match status" value="1"/>
</dbReference>
<dbReference type="InterPro" id="IPR041567">
    <property type="entry name" value="COI1_F-box"/>
</dbReference>
<dbReference type="InterPro" id="IPR036047">
    <property type="entry name" value="F-box-like_dom_sf"/>
</dbReference>
<dbReference type="InterPro" id="IPR001611">
    <property type="entry name" value="Leu-rich_rpt"/>
</dbReference>
<dbReference type="InterPro" id="IPR006553">
    <property type="entry name" value="Leu-rich_rpt_Cys-con_subtyp"/>
</dbReference>
<dbReference type="InterPro" id="IPR032675">
    <property type="entry name" value="LRR_dom_sf"/>
</dbReference>
<dbReference type="InterPro" id="IPR041101">
    <property type="entry name" value="Transp_inhibit"/>
</dbReference>
<dbReference type="PANTHER" id="PTHR16134">
    <property type="entry name" value="F-BOX/TPR REPEAT PROTEIN POF3"/>
    <property type="match status" value="1"/>
</dbReference>
<dbReference type="PANTHER" id="PTHR16134:SF148">
    <property type="entry name" value="S-PHASE KINASE-ASSOCIATED PROTEIN 2, ISOFORM A"/>
    <property type="match status" value="1"/>
</dbReference>
<dbReference type="Pfam" id="PF18511">
    <property type="entry name" value="F-box_5"/>
    <property type="match status" value="1"/>
</dbReference>
<dbReference type="Pfam" id="PF13516">
    <property type="entry name" value="LRR_6"/>
    <property type="match status" value="1"/>
</dbReference>
<dbReference type="Pfam" id="PF18791">
    <property type="entry name" value="Transp_inhibit"/>
    <property type="match status" value="1"/>
</dbReference>
<dbReference type="SMART" id="SM00367">
    <property type="entry name" value="LRR_CC"/>
    <property type="match status" value="4"/>
</dbReference>
<dbReference type="SUPFAM" id="SSF81383">
    <property type="entry name" value="F-box domain"/>
    <property type="match status" value="1"/>
</dbReference>
<dbReference type="SUPFAM" id="SSF52047">
    <property type="entry name" value="RNI-like"/>
    <property type="match status" value="1"/>
</dbReference>
<proteinExistence type="evidence at protein level"/>
<protein>
    <recommendedName>
        <fullName evidence="11">Coronatine-insensitive protein homolog 1a</fullName>
        <shortName evidence="10">OsCOI1a</shortName>
    </recommendedName>
</protein>
<organism evidence="12">
    <name type="scientific">Oryza sativa subsp. japonica</name>
    <name type="common">Rice</name>
    <dbReference type="NCBI Taxonomy" id="39947"/>
    <lineage>
        <taxon>Eukaryota</taxon>
        <taxon>Viridiplantae</taxon>
        <taxon>Streptophyta</taxon>
        <taxon>Embryophyta</taxon>
        <taxon>Tracheophyta</taxon>
        <taxon>Spermatophyta</taxon>
        <taxon>Magnoliopsida</taxon>
        <taxon>Liliopsida</taxon>
        <taxon>Poales</taxon>
        <taxon>Poaceae</taxon>
        <taxon>BOP clade</taxon>
        <taxon>Oryzoideae</taxon>
        <taxon>Oryzeae</taxon>
        <taxon>Oryzinae</taxon>
        <taxon>Oryza</taxon>
        <taxon>Oryza sativa</taxon>
    </lineage>
</organism>
<reference key="1">
    <citation type="submission" date="2002-10" db="EMBL/GenBank/DDBJ databases">
        <title>Oryza sativa japonica group COI1 mRNA.</title>
        <authorList>
            <person name="Wang W."/>
            <person name="Wang X."/>
        </authorList>
    </citation>
    <scope>NUCLEOTIDE SEQUENCE [MRNA]</scope>
</reference>
<reference key="2">
    <citation type="submission" date="2005-04" db="EMBL/GenBank/DDBJ databases">
        <title>Oryza sativa japonica group coronatine-insensitive 1 mRNA.</title>
        <authorList>
            <person name="Dai L."/>
            <person name="Wang Z."/>
            <person name="Zhou Q."/>
            <person name="Xie D."/>
            <person name="Wang G."/>
        </authorList>
    </citation>
    <scope>NUCLEOTIDE SEQUENCE [MRNA]</scope>
</reference>
<reference key="3">
    <citation type="journal article" date="2002" name="Nature">
        <title>The genome sequence and structure of rice chromosome 1.</title>
        <authorList>
            <person name="Sasaki T."/>
            <person name="Matsumoto T."/>
            <person name="Yamamoto K."/>
            <person name="Sakata K."/>
            <person name="Baba T."/>
            <person name="Katayose Y."/>
            <person name="Wu J."/>
            <person name="Niimura Y."/>
            <person name="Cheng Z."/>
            <person name="Nagamura Y."/>
            <person name="Antonio B.A."/>
            <person name="Kanamori H."/>
            <person name="Hosokawa S."/>
            <person name="Masukawa M."/>
            <person name="Arikawa K."/>
            <person name="Chiden Y."/>
            <person name="Hayashi M."/>
            <person name="Okamoto M."/>
            <person name="Ando T."/>
            <person name="Aoki H."/>
            <person name="Arita K."/>
            <person name="Hamada M."/>
            <person name="Harada C."/>
            <person name="Hijishita S."/>
            <person name="Honda M."/>
            <person name="Ichikawa Y."/>
            <person name="Idonuma A."/>
            <person name="Iijima M."/>
            <person name="Ikeda M."/>
            <person name="Ikeno M."/>
            <person name="Ito S."/>
            <person name="Ito T."/>
            <person name="Ito Y."/>
            <person name="Ito Y."/>
            <person name="Iwabuchi A."/>
            <person name="Kamiya K."/>
            <person name="Karasawa W."/>
            <person name="Katagiri S."/>
            <person name="Kikuta A."/>
            <person name="Kobayashi N."/>
            <person name="Kono I."/>
            <person name="Machita K."/>
            <person name="Maehara T."/>
            <person name="Mizuno H."/>
            <person name="Mizubayashi T."/>
            <person name="Mukai Y."/>
            <person name="Nagasaki H."/>
            <person name="Nakashima M."/>
            <person name="Nakama Y."/>
            <person name="Nakamichi Y."/>
            <person name="Nakamura M."/>
            <person name="Namiki N."/>
            <person name="Negishi M."/>
            <person name="Ohta I."/>
            <person name="Ono N."/>
            <person name="Saji S."/>
            <person name="Sakai K."/>
            <person name="Shibata M."/>
            <person name="Shimokawa T."/>
            <person name="Shomura A."/>
            <person name="Song J."/>
            <person name="Takazaki Y."/>
            <person name="Terasawa K."/>
            <person name="Tsuji K."/>
            <person name="Waki K."/>
            <person name="Yamagata H."/>
            <person name="Yamane H."/>
            <person name="Yoshiki S."/>
            <person name="Yoshihara R."/>
            <person name="Yukawa K."/>
            <person name="Zhong H."/>
            <person name="Iwama H."/>
            <person name="Endo T."/>
            <person name="Ito H."/>
            <person name="Hahn J.H."/>
            <person name="Kim H.-I."/>
            <person name="Eun M.-Y."/>
            <person name="Yano M."/>
            <person name="Jiang J."/>
            <person name="Gojobori T."/>
        </authorList>
    </citation>
    <scope>NUCLEOTIDE SEQUENCE [LARGE SCALE GENOMIC DNA]</scope>
    <source>
        <strain>cv. Nipponbare</strain>
    </source>
</reference>
<reference key="4">
    <citation type="journal article" date="2005" name="Nature">
        <title>The map-based sequence of the rice genome.</title>
        <authorList>
            <consortium name="International rice genome sequencing project (IRGSP)"/>
        </authorList>
    </citation>
    <scope>NUCLEOTIDE SEQUENCE [LARGE SCALE GENOMIC DNA]</scope>
    <source>
        <strain>cv. Nipponbare</strain>
    </source>
</reference>
<reference key="5">
    <citation type="journal article" date="2008" name="Nucleic Acids Res.">
        <title>The rice annotation project database (RAP-DB): 2008 update.</title>
        <authorList>
            <consortium name="The rice annotation project (RAP)"/>
        </authorList>
    </citation>
    <scope>GENOME REANNOTATION</scope>
    <source>
        <strain>cv. Nipponbare</strain>
    </source>
</reference>
<reference key="6">
    <citation type="journal article" date="2013" name="Rice">
        <title>Improvement of the Oryza sativa Nipponbare reference genome using next generation sequence and optical map data.</title>
        <authorList>
            <person name="Kawahara Y."/>
            <person name="de la Bastide M."/>
            <person name="Hamilton J.P."/>
            <person name="Kanamori H."/>
            <person name="McCombie W.R."/>
            <person name="Ouyang S."/>
            <person name="Schwartz D.C."/>
            <person name="Tanaka T."/>
            <person name="Wu J."/>
            <person name="Zhou S."/>
            <person name="Childs K.L."/>
            <person name="Davidson R.M."/>
            <person name="Lin H."/>
            <person name="Quesada-Ocampo L."/>
            <person name="Vaillancourt B."/>
            <person name="Sakai H."/>
            <person name="Lee S.S."/>
            <person name="Kim J."/>
            <person name="Numa H."/>
            <person name="Itoh T."/>
            <person name="Buell C.R."/>
            <person name="Matsumoto T."/>
        </authorList>
    </citation>
    <scope>GENOME REANNOTATION</scope>
    <source>
        <strain>cv. Nipponbare</strain>
    </source>
</reference>
<reference key="7">
    <citation type="journal article" date="2005" name="PLoS Biol.">
        <title>The genomes of Oryza sativa: a history of duplications.</title>
        <authorList>
            <person name="Yu J."/>
            <person name="Wang J."/>
            <person name="Lin W."/>
            <person name="Li S."/>
            <person name="Li H."/>
            <person name="Zhou J."/>
            <person name="Ni P."/>
            <person name="Dong W."/>
            <person name="Hu S."/>
            <person name="Zeng C."/>
            <person name="Zhang J."/>
            <person name="Zhang Y."/>
            <person name="Li R."/>
            <person name="Xu Z."/>
            <person name="Li S."/>
            <person name="Li X."/>
            <person name="Zheng H."/>
            <person name="Cong L."/>
            <person name="Lin L."/>
            <person name="Yin J."/>
            <person name="Geng J."/>
            <person name="Li G."/>
            <person name="Shi J."/>
            <person name="Liu J."/>
            <person name="Lv H."/>
            <person name="Li J."/>
            <person name="Wang J."/>
            <person name="Deng Y."/>
            <person name="Ran L."/>
            <person name="Shi X."/>
            <person name="Wang X."/>
            <person name="Wu Q."/>
            <person name="Li C."/>
            <person name="Ren X."/>
            <person name="Wang J."/>
            <person name="Wang X."/>
            <person name="Li D."/>
            <person name="Liu D."/>
            <person name="Zhang X."/>
            <person name="Ji Z."/>
            <person name="Zhao W."/>
            <person name="Sun Y."/>
            <person name="Zhang Z."/>
            <person name="Bao J."/>
            <person name="Han Y."/>
            <person name="Dong L."/>
            <person name="Ji J."/>
            <person name="Chen P."/>
            <person name="Wu S."/>
            <person name="Liu J."/>
            <person name="Xiao Y."/>
            <person name="Bu D."/>
            <person name="Tan J."/>
            <person name="Yang L."/>
            <person name="Ye C."/>
            <person name="Zhang J."/>
            <person name="Xu J."/>
            <person name="Zhou Y."/>
            <person name="Yu Y."/>
            <person name="Zhang B."/>
            <person name="Zhuang S."/>
            <person name="Wei H."/>
            <person name="Liu B."/>
            <person name="Lei M."/>
            <person name="Yu H."/>
            <person name="Li Y."/>
            <person name="Xu H."/>
            <person name="Wei S."/>
            <person name="He X."/>
            <person name="Fang L."/>
            <person name="Zhang Z."/>
            <person name="Zhang Y."/>
            <person name="Huang X."/>
            <person name="Su Z."/>
            <person name="Tong W."/>
            <person name="Li J."/>
            <person name="Tong Z."/>
            <person name="Li S."/>
            <person name="Ye J."/>
            <person name="Wang L."/>
            <person name="Fang L."/>
            <person name="Lei T."/>
            <person name="Chen C.-S."/>
            <person name="Chen H.-C."/>
            <person name="Xu Z."/>
            <person name="Li H."/>
            <person name="Huang H."/>
            <person name="Zhang F."/>
            <person name="Xu H."/>
            <person name="Li N."/>
            <person name="Zhao C."/>
            <person name="Li S."/>
            <person name="Dong L."/>
            <person name="Huang Y."/>
            <person name="Li L."/>
            <person name="Xi Y."/>
            <person name="Qi Q."/>
            <person name="Li W."/>
            <person name="Zhang B."/>
            <person name="Hu W."/>
            <person name="Zhang Y."/>
            <person name="Tian X."/>
            <person name="Jiao Y."/>
            <person name="Liang X."/>
            <person name="Jin J."/>
            <person name="Gao L."/>
            <person name="Zheng W."/>
            <person name="Hao B."/>
            <person name="Liu S.-M."/>
            <person name="Wang W."/>
            <person name="Yuan L."/>
            <person name="Cao M."/>
            <person name="McDermott J."/>
            <person name="Samudrala R."/>
            <person name="Wang J."/>
            <person name="Wong G.K.-S."/>
            <person name="Yang H."/>
        </authorList>
    </citation>
    <scope>NUCLEOTIDE SEQUENCE [LARGE SCALE GENOMIC DNA]</scope>
    <source>
        <strain>cv. Nipponbare</strain>
    </source>
</reference>
<reference key="8">
    <citation type="journal article" date="2011" name="Plant J.">
        <title>OsbHLH148, a basic helix-loop-helix protein, interacts with OsJAZ proteins in a jasmonate signaling pathway leading to drought tolerance in rice.</title>
        <authorList>
            <person name="Seo J.S."/>
            <person name="Joo J."/>
            <person name="Kim M.J."/>
            <person name="Kim Y.K."/>
            <person name="Nahm B.H."/>
            <person name="Song S.I."/>
            <person name="Cheong J.J."/>
            <person name="Lee J.S."/>
            <person name="Kim J.K."/>
            <person name="Choi Y.D."/>
        </authorList>
    </citation>
    <scope>FUNCTION</scope>
    <scope>INTERACTION WITH TIFY6A/JAZ3; TIFY6B/JAZ4 AND TIFY11D/JAZ12</scope>
</reference>
<reference key="9">
    <citation type="journal article" date="2012" name="PLoS ONE">
        <title>silencing COI1 in rice increases susceptibility to chewing insects and impairs inducible defense.</title>
        <authorList>
            <person name="Ye M."/>
            <person name="Luo S.M."/>
            <person name="Xie J.F."/>
            <person name="Li Y.F."/>
            <person name="Xu T."/>
            <person name="Liu Y."/>
            <person name="Song Y.Y."/>
            <person name="Zhu-Salzman K."/>
            <person name="Zeng R.S."/>
        </authorList>
    </citation>
    <scope>FUNCTION</scope>
    <scope>INDUCTION</scope>
</reference>
<reference key="10">
    <citation type="journal article" date="2012" name="Proc. Natl. Acad. Sci. U.S.A.">
        <title>Plant hormone jasmonate prioritizes defense over growth by interfering with gibberellin signaling cascade.</title>
        <authorList>
            <person name="Yang D.L."/>
            <person name="Yao J."/>
            <person name="Mei C.S."/>
            <person name="Tong X.H."/>
            <person name="Zeng L.J."/>
            <person name="Li Q."/>
            <person name="Xiao L.T."/>
            <person name="Sun T.P."/>
            <person name="Li J."/>
            <person name="Deng X.W."/>
            <person name="Lee C.M."/>
            <person name="Thomashow M.F."/>
            <person name="Yang Y."/>
            <person name="He Z."/>
            <person name="He S.Y."/>
        </authorList>
    </citation>
    <scope>FUNCTION</scope>
</reference>
<reference key="11">
    <citation type="journal article" date="2013" name="PLoS ONE">
        <title>Oryza sativa COI homologues restore jasmonate signal transduction in Arabidopsis coi1-1 mutants.</title>
        <authorList>
            <person name="Lee H.Y."/>
            <person name="Seo J.S."/>
            <person name="Cho J.H."/>
            <person name="Jung H."/>
            <person name="Kim J.K."/>
            <person name="Lee J.S."/>
            <person name="Rhee S."/>
            <person name="Do Choi Y."/>
        </authorList>
    </citation>
    <scope>FUNCTION</scope>
    <scope>INTERACTION WITH TIFY6A/JAZ3; TIFY6B/JAZ4; TIFY9/JAZ5; TIFY10A/JAZ6; TIFY10B/JAZ7; TIFY11A/JAZ9; TIFY11C/JAZ11 AND TIFY11D/JAZ12</scope>
    <scope>TISSUE SPECIFICITY</scope>
</reference>
<reference key="12">
    <citation type="journal article" date="2013" name="Proc. Natl. Acad. Sci. U.S.A.">
        <title>Priming of jasmonate-mediated antiherbivore defense responses in rice by silicon.</title>
        <authorList>
            <person name="Ye M."/>
            <person name="Song Y."/>
            <person name="Long J."/>
            <person name="Wang R."/>
            <person name="Baerson S.R."/>
            <person name="Pan Z."/>
            <person name="Zhu-Salzman K."/>
            <person name="Xie J."/>
            <person name="Cai K."/>
            <person name="Luo S."/>
            <person name="Zeng R."/>
        </authorList>
    </citation>
    <scope>FUNCTION</scope>
</reference>
<reference key="13">
    <citation type="journal article" date="2015" name="Plant Sci.">
        <title>OsJAZ9 acts as a transcriptional regulator in jasmonate signaling and modulates salt stress tolerance in rice.</title>
        <authorList>
            <person name="Wu H."/>
            <person name="Ye H."/>
            <person name="Yao R."/>
            <person name="Zhang T."/>
            <person name="Xiong L."/>
        </authorList>
    </citation>
    <scope>INTERACTION WITH TIFY11A/JAZ9</scope>
</reference>
<evidence type="ECO:0000250" key="1">
    <source>
        <dbReference type="UniProtKB" id="O04197"/>
    </source>
</evidence>
<evidence type="ECO:0000255" key="2"/>
<evidence type="ECO:0000269" key="3">
    <source>
    </source>
</evidence>
<evidence type="ECO:0000269" key="4">
    <source>
    </source>
</evidence>
<evidence type="ECO:0000269" key="5">
    <source>
    </source>
</evidence>
<evidence type="ECO:0000269" key="6">
    <source>
    </source>
</evidence>
<evidence type="ECO:0000269" key="7">
    <source>
    </source>
</evidence>
<evidence type="ECO:0000269" key="8">
    <source>
    </source>
</evidence>
<evidence type="ECO:0000303" key="9">
    <source>
    </source>
</evidence>
<evidence type="ECO:0000303" key="10">
    <source>
    </source>
</evidence>
<evidence type="ECO:0000305" key="11"/>
<evidence type="ECO:0000312" key="12">
    <source>
        <dbReference type="EMBL" id="AAO38719.1"/>
    </source>
</evidence>
<evidence type="ECO:0000312" key="13">
    <source>
        <dbReference type="EMBL" id="BAD81943.1"/>
    </source>
</evidence>
<evidence type="ECO:0000312" key="14">
    <source>
        <dbReference type="EMBL" id="BAF06745.2"/>
    </source>
</evidence>
<evidence type="ECO:0000312" key="15">
    <source>
        <dbReference type="EMBL" id="EAZ14179.1"/>
    </source>
</evidence>
<name>COI1A_ORYSJ</name>
<gene>
    <name evidence="10" type="primary">COI1A</name>
    <name evidence="9" type="synonym">COI1</name>
    <name evidence="14" type="ordered locus">Os01g0853400</name>
    <name evidence="11" type="ordered locus">LOC_Os01g63420</name>
    <name evidence="15" type="ORF">OsJ_04105</name>
    <name evidence="13" type="ORF">P0529E05.20</name>
</gene>
<sequence>MGGEVPEPRRLNRALSFDDWVPDEALHLVMGHVEDPRDREAASRVCRRWHRIDALTRKHVTVAFCYAARPARLRERFPRLESLSLKGKPRAAMYGLIPDDWGAYAAPWIDELAAPLECLKALHLRRMTVTDADIAALVRARGHMLQELKLDKCIGFSTDALRLVARSCRSLRTLFLEECHITDKGGEWLHELAVNNSVLVTLNFYMTELKVAPADLELLAKNCKSLISLKMSECDLSDLISFFQTANALQDFAGGAFYEVGELTKYEKVKFPPRLCFLGLTYMGTNEMPVIFPFSMKLKKLDLQYTFLTTEDHCQIIAKCPNLLILEVRNVIGDRGLEVVGDTCKKLRRLRIERGDDDPGLQEEQGGVSQLGLTAVAVGCRELEYIAAYVSDITNGALESIGTFCKNLYDFRLVLLDRERQVTDLPLDNGVCALLRNCTKLRRFALYLRPGGLSDDGLSYIGQYSGNIQYMLLGNVGESDHGLIRFAVGCTNLQKLELRSCCFSERALSLAVLQMPSLRYIWVQGYRASQTGLDLLLMARPFWNIEFTPPSPESFNHMTEDGEPCVDSHAQVLAYYSLAGRRSDCPQWVIPLHPA</sequence>
<accession>Q6Y9P5</accession>
<accession>A0A0P0VAF7</accession>
<accession>Q0JHN3</accession>
<feature type="chain" id="PRO_0000434866" description="Coronatine-insensitive protein homolog 1a">
    <location>
        <begin position="1"/>
        <end position="595"/>
    </location>
</feature>
<feature type="domain" description="F-box" evidence="2">
    <location>
        <begin position="20"/>
        <end position="62"/>
    </location>
</feature>
<feature type="binding site" evidence="1">
    <location>
        <position position="90"/>
    </location>
    <ligand>
        <name>jasmonate</name>
        <dbReference type="ChEBI" id="CHEBI:58431"/>
    </ligand>
</feature>
<feature type="binding site" evidence="1">
    <location>
        <position position="351"/>
    </location>
    <ligand>
        <name>jasmonate</name>
        <dbReference type="ChEBI" id="CHEBI:58431"/>
    </ligand>
</feature>
<feature type="binding site" evidence="1">
    <location>
        <position position="389"/>
    </location>
    <ligand>
        <name>jasmonate</name>
        <dbReference type="ChEBI" id="CHEBI:58431"/>
    </ligand>
</feature>
<feature type="binding site" evidence="1">
    <location>
        <position position="412"/>
    </location>
    <ligand>
        <name>jasmonate</name>
        <dbReference type="ChEBI" id="CHEBI:58431"/>
    </ligand>
</feature>
<feature type="binding site" evidence="1">
    <location>
        <position position="499"/>
    </location>
    <ligand>
        <name>jasmonate</name>
        <dbReference type="ChEBI" id="CHEBI:58431"/>
    </ligand>
</feature>
<keyword id="KW-1184">Jasmonic acid signaling pathway</keyword>
<keyword id="KW-0611">Plant defense</keyword>
<keyword id="KW-1185">Reference proteome</keyword>
<keyword id="KW-0346">Stress response</keyword>
<keyword id="KW-0833">Ubl conjugation pathway</keyword>